<comment type="function">
    <text>Exhibits a dual-cofactor specificity, with a marked preference for NADP(+) over NAD(+).</text>
</comment>
<comment type="catalytic activity">
    <reaction>
        <text>D-glyceraldehyde 3-phosphate + phosphate + NADP(+) = (2R)-3-phospho-glyceroyl phosphate + NADPH + H(+)</text>
        <dbReference type="Rhea" id="RHEA:10296"/>
        <dbReference type="ChEBI" id="CHEBI:15378"/>
        <dbReference type="ChEBI" id="CHEBI:43474"/>
        <dbReference type="ChEBI" id="CHEBI:57604"/>
        <dbReference type="ChEBI" id="CHEBI:57783"/>
        <dbReference type="ChEBI" id="CHEBI:58349"/>
        <dbReference type="ChEBI" id="CHEBI:59776"/>
        <dbReference type="EC" id="1.2.1.59"/>
    </reaction>
</comment>
<comment type="catalytic activity">
    <reaction>
        <text>D-glyceraldehyde 3-phosphate + phosphate + NAD(+) = (2R)-3-phospho-glyceroyl phosphate + NADH + H(+)</text>
        <dbReference type="Rhea" id="RHEA:10300"/>
        <dbReference type="ChEBI" id="CHEBI:15378"/>
        <dbReference type="ChEBI" id="CHEBI:43474"/>
        <dbReference type="ChEBI" id="CHEBI:57540"/>
        <dbReference type="ChEBI" id="CHEBI:57604"/>
        <dbReference type="ChEBI" id="CHEBI:57945"/>
        <dbReference type="ChEBI" id="CHEBI:59776"/>
        <dbReference type="EC" id="1.2.1.59"/>
    </reaction>
</comment>
<comment type="pathway">
    <text>Carbohydrate degradation; glycolysis; pyruvate from D-glyceraldehyde 3-phosphate: step 1/5.</text>
</comment>
<comment type="subunit">
    <text evidence="2">Homotetramer.</text>
</comment>
<comment type="subcellular location">
    <subcellularLocation>
        <location>Cytoplasm</location>
    </subcellularLocation>
</comment>
<comment type="similarity">
    <text evidence="3">Belongs to the glyceraldehyde-3-phosphate dehydrogenase family.</text>
</comment>
<dbReference type="EC" id="1.2.1.59"/>
<dbReference type="EMBL" id="M19980">
    <property type="protein sequence ID" value="AAA88227.1"/>
    <property type="molecule type" value="Genomic_DNA"/>
</dbReference>
<dbReference type="PIR" id="JT0286">
    <property type="entry name" value="JT0286"/>
</dbReference>
<dbReference type="RefSeq" id="WP_013413357.1">
    <property type="nucleotide sequence ID" value="NC_014658.1"/>
</dbReference>
<dbReference type="PDB" id="1CF2">
    <property type="method" value="X-ray"/>
    <property type="resolution" value="2.10 A"/>
    <property type="chains" value="O/P/Q/R=1-337"/>
</dbReference>
<dbReference type="PDBsum" id="1CF2"/>
<dbReference type="SMR" id="P10618"/>
<dbReference type="OMA" id="YIQAVHQ"/>
<dbReference type="SABIO-RK" id="P10618"/>
<dbReference type="UniPathway" id="UPA00109">
    <property type="reaction ID" value="UER00184"/>
</dbReference>
<dbReference type="EvolutionaryTrace" id="P10618"/>
<dbReference type="GO" id="GO:0005737">
    <property type="term" value="C:cytoplasm"/>
    <property type="evidence" value="ECO:0007669"/>
    <property type="project" value="UniProtKB-SubCell"/>
</dbReference>
<dbReference type="GO" id="GO:0008839">
    <property type="term" value="F:4-hydroxy-tetrahydrodipicolinate reductase"/>
    <property type="evidence" value="ECO:0007669"/>
    <property type="project" value="InterPro"/>
</dbReference>
<dbReference type="GO" id="GO:0004365">
    <property type="term" value="F:glyceraldehyde-3-phosphate dehydrogenase (NAD+) (phosphorylating) activity"/>
    <property type="evidence" value="ECO:0007669"/>
    <property type="project" value="UniProtKB-UniRule"/>
</dbReference>
<dbReference type="GO" id="GO:0047100">
    <property type="term" value="F:glyceraldehyde-3-phosphate dehydrogenase (NADP+) (phosphorylating) activity"/>
    <property type="evidence" value="ECO:0000315"/>
    <property type="project" value="CACAO"/>
</dbReference>
<dbReference type="GO" id="GO:0051287">
    <property type="term" value="F:NAD binding"/>
    <property type="evidence" value="ECO:0007669"/>
    <property type="project" value="InterPro"/>
</dbReference>
<dbReference type="GO" id="GO:0050661">
    <property type="term" value="F:NADP binding"/>
    <property type="evidence" value="ECO:0007669"/>
    <property type="project" value="InterPro"/>
</dbReference>
<dbReference type="GO" id="GO:0006096">
    <property type="term" value="P:glycolytic process"/>
    <property type="evidence" value="ECO:0007669"/>
    <property type="project" value="UniProtKB-UniRule"/>
</dbReference>
<dbReference type="GO" id="GO:0009089">
    <property type="term" value="P:lysine biosynthetic process via diaminopimelate"/>
    <property type="evidence" value="ECO:0007669"/>
    <property type="project" value="InterPro"/>
</dbReference>
<dbReference type="CDD" id="cd18127">
    <property type="entry name" value="GAPDH_II_C"/>
    <property type="match status" value="1"/>
</dbReference>
<dbReference type="CDD" id="cd02278">
    <property type="entry name" value="GAPDH_II_N"/>
    <property type="match status" value="1"/>
</dbReference>
<dbReference type="Gene3D" id="3.30.360.10">
    <property type="entry name" value="Dihydrodipicolinate Reductase, domain 2"/>
    <property type="match status" value="1"/>
</dbReference>
<dbReference type="Gene3D" id="3.40.50.720">
    <property type="entry name" value="NAD(P)-binding Rossmann-like Domain"/>
    <property type="match status" value="1"/>
</dbReference>
<dbReference type="HAMAP" id="MF_00559">
    <property type="entry name" value="G3P_dehdrog_arch"/>
    <property type="match status" value="1"/>
</dbReference>
<dbReference type="InterPro" id="IPR000846">
    <property type="entry name" value="DapB_N"/>
</dbReference>
<dbReference type="InterPro" id="IPR020831">
    <property type="entry name" value="GlycerAld/Erythrose_P_DH"/>
</dbReference>
<dbReference type="InterPro" id="IPR020830">
    <property type="entry name" value="GlycerAld_3-P_DH_AS"/>
</dbReference>
<dbReference type="InterPro" id="IPR020829">
    <property type="entry name" value="GlycerAld_3-P_DH_cat"/>
</dbReference>
<dbReference type="InterPro" id="IPR020828">
    <property type="entry name" value="GlycerAld_3-P_DH_NAD(P)-bd"/>
</dbReference>
<dbReference type="InterPro" id="IPR006436">
    <property type="entry name" value="Glyceraldehyde-3-P_DH_2_arc"/>
</dbReference>
<dbReference type="InterPro" id="IPR036291">
    <property type="entry name" value="NAD(P)-bd_dom_sf"/>
</dbReference>
<dbReference type="NCBIfam" id="TIGR01546">
    <property type="entry name" value="GAPDH-II_archae"/>
    <property type="match status" value="1"/>
</dbReference>
<dbReference type="NCBIfam" id="NF003251">
    <property type="entry name" value="PRK04207.1"/>
    <property type="match status" value="1"/>
</dbReference>
<dbReference type="Pfam" id="PF01113">
    <property type="entry name" value="DapB_N"/>
    <property type="match status" value="1"/>
</dbReference>
<dbReference type="Pfam" id="PF02800">
    <property type="entry name" value="Gp_dh_C"/>
    <property type="match status" value="1"/>
</dbReference>
<dbReference type="PIRSF" id="PIRSF000149">
    <property type="entry name" value="GAP_DH"/>
    <property type="match status" value="1"/>
</dbReference>
<dbReference type="SMART" id="SM00846">
    <property type="entry name" value="Gp_dh_N"/>
    <property type="match status" value="1"/>
</dbReference>
<dbReference type="SUPFAM" id="SSF55347">
    <property type="entry name" value="Glyceraldehyde-3-phosphate dehydrogenase-like, C-terminal domain"/>
    <property type="match status" value="1"/>
</dbReference>
<dbReference type="SUPFAM" id="SSF51735">
    <property type="entry name" value="NAD(P)-binding Rossmann-fold domains"/>
    <property type="match status" value="1"/>
</dbReference>
<dbReference type="PROSITE" id="PS00071">
    <property type="entry name" value="GAPDH"/>
    <property type="match status" value="1"/>
</dbReference>
<proteinExistence type="evidence at protein level"/>
<protein>
    <recommendedName>
        <fullName>Glyceraldehyde-3-phosphate dehydrogenase</fullName>
        <shortName>GAPDH</shortName>
        <ecNumber>1.2.1.59</ecNumber>
    </recommendedName>
    <alternativeName>
        <fullName>NAD(P)-dependent glyceraldehyde-3-phosphate dehydrogenase</fullName>
    </alternativeName>
</protein>
<accession>P10618</accession>
<feature type="chain" id="PRO_0000145722" description="Glyceraldehyde-3-phosphate dehydrogenase">
    <location>
        <begin position="1"/>
        <end position="337"/>
    </location>
</feature>
<feature type="active site" description="Nucleophile" evidence="1">
    <location>
        <position position="140"/>
    </location>
</feature>
<feature type="binding site" evidence="2">
    <location>
        <begin position="11"/>
        <end position="12"/>
    </location>
    <ligand>
        <name>NADP(+)</name>
        <dbReference type="ChEBI" id="CHEBI:58349"/>
    </ligand>
</feature>
<feature type="binding site" evidence="2">
    <location>
        <begin position="34"/>
        <end position="35"/>
    </location>
    <ligand>
        <name>NADP(+)</name>
        <dbReference type="ChEBI" id="CHEBI:58349"/>
    </ligand>
</feature>
<feature type="binding site" evidence="2">
    <location>
        <position position="110"/>
    </location>
    <ligand>
        <name>NADP(+)</name>
        <dbReference type="ChEBI" id="CHEBI:58349"/>
    </ligand>
</feature>
<feature type="binding site" evidence="1">
    <location>
        <begin position="139"/>
        <end position="141"/>
    </location>
    <ligand>
        <name>D-glyceraldehyde 3-phosphate</name>
        <dbReference type="ChEBI" id="CHEBI:59776"/>
    </ligand>
</feature>
<feature type="binding site" evidence="2">
    <location>
        <position position="171"/>
    </location>
    <ligand>
        <name>NADP(+)</name>
        <dbReference type="ChEBI" id="CHEBI:58349"/>
    </ligand>
</feature>
<feature type="binding site" evidence="1">
    <location>
        <begin position="194"/>
        <end position="195"/>
    </location>
    <ligand>
        <name>D-glyceraldehyde 3-phosphate</name>
        <dbReference type="ChEBI" id="CHEBI:59776"/>
    </ligand>
</feature>
<feature type="binding site" evidence="1">
    <location>
        <position position="300"/>
    </location>
    <ligand>
        <name>NADP(+)</name>
        <dbReference type="ChEBI" id="CHEBI:58349"/>
    </ligand>
</feature>
<feature type="strand" evidence="4">
    <location>
        <begin position="2"/>
        <end position="7"/>
    </location>
</feature>
<feature type="helix" evidence="4">
    <location>
        <begin position="13"/>
        <end position="21"/>
    </location>
</feature>
<feature type="strand" evidence="4">
    <location>
        <begin position="23"/>
        <end position="35"/>
    </location>
</feature>
<feature type="helix" evidence="4">
    <location>
        <begin position="38"/>
        <end position="45"/>
    </location>
</feature>
<feature type="strand" evidence="4">
    <location>
        <begin position="50"/>
        <end position="54"/>
    </location>
</feature>
<feature type="helix" evidence="4">
    <location>
        <begin position="55"/>
        <end position="57"/>
    </location>
</feature>
<feature type="helix" evidence="4">
    <location>
        <begin position="58"/>
        <end position="63"/>
    </location>
</feature>
<feature type="helix" evidence="4">
    <location>
        <begin position="72"/>
        <end position="77"/>
    </location>
</feature>
<feature type="strand" evidence="4">
    <location>
        <begin position="80"/>
        <end position="84"/>
    </location>
</feature>
<feature type="helix" evidence="4">
    <location>
        <begin position="90"/>
        <end position="101"/>
    </location>
</feature>
<feature type="strand" evidence="4">
    <location>
        <begin position="105"/>
        <end position="107"/>
    </location>
</feature>
<feature type="helix" evidence="4">
    <location>
        <begin position="113"/>
        <end position="116"/>
    </location>
</feature>
<feature type="helix" evidence="4">
    <location>
        <begin position="122"/>
        <end position="125"/>
    </location>
</feature>
<feature type="helix" evidence="4">
    <location>
        <begin position="126"/>
        <end position="129"/>
    </location>
</feature>
<feature type="strand" evidence="4">
    <location>
        <begin position="133"/>
        <end position="137"/>
    </location>
</feature>
<feature type="helix" evidence="4">
    <location>
        <begin position="140"/>
        <end position="156"/>
    </location>
</feature>
<feature type="strand" evidence="4">
    <location>
        <begin position="158"/>
        <end position="170"/>
    </location>
</feature>
<feature type="strand" evidence="4">
    <location>
        <begin position="184"/>
        <end position="191"/>
    </location>
</feature>
<feature type="helix" evidence="4">
    <location>
        <begin position="194"/>
        <end position="199"/>
    </location>
</feature>
<feature type="strand" evidence="4">
    <location>
        <begin position="206"/>
        <end position="214"/>
    </location>
</feature>
<feature type="strand" evidence="4">
    <location>
        <begin position="219"/>
        <end position="229"/>
    </location>
</feature>
<feature type="helix" evidence="4">
    <location>
        <begin position="233"/>
        <end position="242"/>
    </location>
</feature>
<feature type="strand" evidence="4">
    <location>
        <begin position="246"/>
        <end position="249"/>
    </location>
</feature>
<feature type="turn" evidence="4">
    <location>
        <begin position="251"/>
        <end position="254"/>
    </location>
</feature>
<feature type="helix" evidence="4">
    <location>
        <begin position="258"/>
        <end position="268"/>
    </location>
</feature>
<feature type="helix" evidence="4">
    <location>
        <begin position="271"/>
        <end position="273"/>
    </location>
</feature>
<feature type="strand" evidence="4">
    <location>
        <begin position="277"/>
        <end position="281"/>
    </location>
</feature>
<feature type="helix" evidence="4">
    <location>
        <begin position="282"/>
        <end position="284"/>
    </location>
</feature>
<feature type="strand" evidence="4">
    <location>
        <begin position="286"/>
        <end position="288"/>
    </location>
</feature>
<feature type="strand" evidence="4">
    <location>
        <begin position="291"/>
        <end position="298"/>
    </location>
</feature>
<feature type="turn" evidence="4">
    <location>
        <begin position="300"/>
        <end position="303"/>
    </location>
</feature>
<feature type="helix" evidence="4">
    <location>
        <begin position="304"/>
        <end position="315"/>
    </location>
</feature>
<feature type="helix" evidence="4">
    <location>
        <begin position="322"/>
        <end position="333"/>
    </location>
</feature>
<keyword id="KW-0002">3D-structure</keyword>
<keyword id="KW-0963">Cytoplasm</keyword>
<keyword id="KW-0324">Glycolysis</keyword>
<keyword id="KW-0520">NAD</keyword>
<keyword id="KW-0521">NADP</keyword>
<keyword id="KW-0560">Oxidoreductase</keyword>
<evidence type="ECO:0000250" key="1"/>
<evidence type="ECO:0000269" key="2">
    <source>
    </source>
</evidence>
<evidence type="ECO:0000305" key="3"/>
<evidence type="ECO:0007829" key="4">
    <source>
        <dbReference type="PDB" id="1CF2"/>
    </source>
</evidence>
<sequence length="337" mass="37408">MKAVAINGYGTVGKRVADAIAQQDDMKVIGVSKTRPDFEARMALKKGYDLYVAIPERVKLFEKAGIEVAGTVDDMLDEADIVIDCTPEGIGAKNLKMYKEKGIKAIFQGGEKHEDIGLSFNSLSNYEESYGKDYTRVVSCNTTGLCRTLKPLHDSFGIKKVRAVIVRRGADPAQVSKGPINAIIPNPPKLPSHHGPDVKTVLDINIDTMAVIVPTTLMHQHNVMVEVEETPTVDDIIDVFEDTPRVILISAEDGLTSTAEIMEYAKELGRSRNDLFEIPVWRESITVVDNEIYYMQAVHQESDIVPENVDAVRAILEMEEDKYKSINKTNKAMNILQ</sequence>
<name>G3P_METFE</name>
<reference key="1">
    <citation type="journal article" date="1988" name="Gene">
        <title>Primary structure of glyceraldehyde-3-phosphate dehydrogenase deduced from the nucleotide sequence of the thermophilic archaebacterium Methanothermus fervidus.</title>
        <authorList>
            <person name="Fabry S."/>
            <person name="Hensel R."/>
        </authorList>
    </citation>
    <scope>NUCLEOTIDE SEQUENCE [GENOMIC DNA]</scope>
</reference>
<reference key="2">
    <citation type="journal article" date="2000" name="J. Mol. Biol.">
        <title>The crystal structure of D-glyceraldehyde-3-phosphate dehydrogenase from the hyperthermophilic archaeon Methanothermus fervidus in the presence of NADP(+) at 2.1 A resolution.</title>
        <authorList>
            <person name="Charron C."/>
            <person name="Talfournier F."/>
            <person name="Isupov M.N."/>
            <person name="Littlechild J.A."/>
            <person name="Branlant G."/>
            <person name="Vitoux B."/>
            <person name="Aubry A."/>
        </authorList>
    </citation>
    <scope>X-RAY CRYSTALLOGRAPHY (2.1 ANGSTROMS) IN COMPLEX WITH NADP</scope>
    <scope>SUBUNIT</scope>
</reference>
<gene>
    <name type="primary">gap</name>
</gene>
<organism>
    <name type="scientific">Methanothermus fervidus</name>
    <dbReference type="NCBI Taxonomy" id="2180"/>
    <lineage>
        <taxon>Archaea</taxon>
        <taxon>Methanobacteriati</taxon>
        <taxon>Methanobacteriota</taxon>
        <taxon>Methanomada group</taxon>
        <taxon>Methanobacteria</taxon>
        <taxon>Methanobacteriales</taxon>
        <taxon>Methanothermaceae</taxon>
        <taxon>Methanothermus</taxon>
    </lineage>
</organism>